<proteinExistence type="inferred from homology"/>
<feature type="chain" id="PRO_1000007752" description="5'-nucleotidase SurE">
    <location>
        <begin position="1"/>
        <end position="248"/>
    </location>
</feature>
<feature type="binding site" evidence="1">
    <location>
        <position position="8"/>
    </location>
    <ligand>
        <name>a divalent metal cation</name>
        <dbReference type="ChEBI" id="CHEBI:60240"/>
    </ligand>
</feature>
<feature type="binding site" evidence="1">
    <location>
        <position position="9"/>
    </location>
    <ligand>
        <name>a divalent metal cation</name>
        <dbReference type="ChEBI" id="CHEBI:60240"/>
    </ligand>
</feature>
<feature type="binding site" evidence="1">
    <location>
        <position position="39"/>
    </location>
    <ligand>
        <name>a divalent metal cation</name>
        <dbReference type="ChEBI" id="CHEBI:60240"/>
    </ligand>
</feature>
<feature type="binding site" evidence="1">
    <location>
        <position position="91"/>
    </location>
    <ligand>
        <name>a divalent metal cation</name>
        <dbReference type="ChEBI" id="CHEBI:60240"/>
    </ligand>
</feature>
<reference key="1">
    <citation type="journal article" date="2007" name="PLoS Genet.">
        <title>Meningococcal genetic variation mechanisms viewed through comparative analysis of serogroup C strain FAM18.</title>
        <authorList>
            <person name="Bentley S.D."/>
            <person name="Vernikos G.S."/>
            <person name="Snyder L.A.S."/>
            <person name="Churcher C."/>
            <person name="Arrowsmith C."/>
            <person name="Chillingworth T."/>
            <person name="Cronin A."/>
            <person name="Davis P.H."/>
            <person name="Holroyd N.E."/>
            <person name="Jagels K."/>
            <person name="Maddison M."/>
            <person name="Moule S."/>
            <person name="Rabbinowitsch E."/>
            <person name="Sharp S."/>
            <person name="Unwin L."/>
            <person name="Whitehead S."/>
            <person name="Quail M.A."/>
            <person name="Achtman M."/>
            <person name="Barrell B.G."/>
            <person name="Saunders N.J."/>
            <person name="Parkhill J."/>
        </authorList>
    </citation>
    <scope>NUCLEOTIDE SEQUENCE [LARGE SCALE GENOMIC DNA]</scope>
    <source>
        <strain>ATCC 700532 / DSM 15464 / FAM18</strain>
    </source>
</reference>
<evidence type="ECO:0000255" key="1">
    <source>
        <dbReference type="HAMAP-Rule" id="MF_00060"/>
    </source>
</evidence>
<name>SURE_NEIMF</name>
<sequence>MNVLISNDDGYLSEGIAVLARVTAEFANVRVVAPERDRSGVSNSLTLERPLQLKQAQNGFYYVNGTPTDCIHIGQSVFSDFQADFVFSGINRGANMGDDTLYSGTVAAATEAYLMGIPAVAFSLNDASGRYWATAEKALWTLLAHFFKNPPQSPILWNINIPAVEPEDVRGIKIARLGRRHHGQNVIPARNPRGEQIYWIGPVGRVSDKEEGTDFGECGAGFITVTPLQIDLTAYPDMAETAAFWHAD</sequence>
<gene>
    <name evidence="1" type="primary">surE</name>
    <name type="ordered locus">NMC1419</name>
</gene>
<dbReference type="EC" id="3.1.3.5" evidence="1"/>
<dbReference type="EMBL" id="AM421808">
    <property type="protein sequence ID" value="CAM10629.1"/>
    <property type="molecule type" value="Genomic_DNA"/>
</dbReference>
<dbReference type="RefSeq" id="WP_002220609.1">
    <property type="nucleotide sequence ID" value="NC_008767.1"/>
</dbReference>
<dbReference type="SMR" id="A1KUT0"/>
<dbReference type="GeneID" id="93387889"/>
<dbReference type="KEGG" id="nmc:NMC1419"/>
<dbReference type="HOGENOM" id="CLU_045192_1_2_4"/>
<dbReference type="Proteomes" id="UP000002286">
    <property type="component" value="Chromosome"/>
</dbReference>
<dbReference type="GO" id="GO:0005737">
    <property type="term" value="C:cytoplasm"/>
    <property type="evidence" value="ECO:0007669"/>
    <property type="project" value="UniProtKB-SubCell"/>
</dbReference>
<dbReference type="GO" id="GO:0008254">
    <property type="term" value="F:3'-nucleotidase activity"/>
    <property type="evidence" value="ECO:0007669"/>
    <property type="project" value="TreeGrafter"/>
</dbReference>
<dbReference type="GO" id="GO:0008253">
    <property type="term" value="F:5'-nucleotidase activity"/>
    <property type="evidence" value="ECO:0007669"/>
    <property type="project" value="UniProtKB-UniRule"/>
</dbReference>
<dbReference type="GO" id="GO:0004309">
    <property type="term" value="F:exopolyphosphatase activity"/>
    <property type="evidence" value="ECO:0007669"/>
    <property type="project" value="TreeGrafter"/>
</dbReference>
<dbReference type="GO" id="GO:0046872">
    <property type="term" value="F:metal ion binding"/>
    <property type="evidence" value="ECO:0007669"/>
    <property type="project" value="UniProtKB-UniRule"/>
</dbReference>
<dbReference type="GO" id="GO:0000166">
    <property type="term" value="F:nucleotide binding"/>
    <property type="evidence" value="ECO:0007669"/>
    <property type="project" value="UniProtKB-KW"/>
</dbReference>
<dbReference type="FunFam" id="3.40.1210.10:FF:000001">
    <property type="entry name" value="5'/3'-nucleotidase SurE"/>
    <property type="match status" value="1"/>
</dbReference>
<dbReference type="Gene3D" id="3.40.1210.10">
    <property type="entry name" value="Survival protein SurE-like phosphatase/nucleotidase"/>
    <property type="match status" value="1"/>
</dbReference>
<dbReference type="HAMAP" id="MF_00060">
    <property type="entry name" value="SurE"/>
    <property type="match status" value="1"/>
</dbReference>
<dbReference type="InterPro" id="IPR030048">
    <property type="entry name" value="SurE"/>
</dbReference>
<dbReference type="InterPro" id="IPR002828">
    <property type="entry name" value="SurE-like_Pase/nucleotidase"/>
</dbReference>
<dbReference type="InterPro" id="IPR036523">
    <property type="entry name" value="SurE-like_sf"/>
</dbReference>
<dbReference type="NCBIfam" id="NF001489">
    <property type="entry name" value="PRK00346.1-3"/>
    <property type="match status" value="1"/>
</dbReference>
<dbReference type="NCBIfam" id="NF001490">
    <property type="entry name" value="PRK00346.1-4"/>
    <property type="match status" value="1"/>
</dbReference>
<dbReference type="NCBIfam" id="TIGR00087">
    <property type="entry name" value="surE"/>
    <property type="match status" value="1"/>
</dbReference>
<dbReference type="PANTHER" id="PTHR30457">
    <property type="entry name" value="5'-NUCLEOTIDASE SURE"/>
    <property type="match status" value="1"/>
</dbReference>
<dbReference type="PANTHER" id="PTHR30457:SF12">
    <property type="entry name" value="5'_3'-NUCLEOTIDASE SURE"/>
    <property type="match status" value="1"/>
</dbReference>
<dbReference type="Pfam" id="PF01975">
    <property type="entry name" value="SurE"/>
    <property type="match status" value="1"/>
</dbReference>
<dbReference type="SUPFAM" id="SSF64167">
    <property type="entry name" value="SurE-like"/>
    <property type="match status" value="1"/>
</dbReference>
<accession>A1KUT0</accession>
<comment type="function">
    <text evidence="1">Nucleotidase that shows phosphatase activity on nucleoside 5'-monophosphates.</text>
</comment>
<comment type="catalytic activity">
    <reaction evidence="1">
        <text>a ribonucleoside 5'-phosphate + H2O = a ribonucleoside + phosphate</text>
        <dbReference type="Rhea" id="RHEA:12484"/>
        <dbReference type="ChEBI" id="CHEBI:15377"/>
        <dbReference type="ChEBI" id="CHEBI:18254"/>
        <dbReference type="ChEBI" id="CHEBI:43474"/>
        <dbReference type="ChEBI" id="CHEBI:58043"/>
        <dbReference type="EC" id="3.1.3.5"/>
    </reaction>
</comment>
<comment type="cofactor">
    <cofactor evidence="1">
        <name>a divalent metal cation</name>
        <dbReference type="ChEBI" id="CHEBI:60240"/>
    </cofactor>
    <text evidence="1">Binds 1 divalent metal cation per subunit.</text>
</comment>
<comment type="subcellular location">
    <subcellularLocation>
        <location evidence="1">Cytoplasm</location>
    </subcellularLocation>
</comment>
<comment type="similarity">
    <text evidence="1">Belongs to the SurE nucleotidase family.</text>
</comment>
<keyword id="KW-0963">Cytoplasm</keyword>
<keyword id="KW-0378">Hydrolase</keyword>
<keyword id="KW-0479">Metal-binding</keyword>
<keyword id="KW-0547">Nucleotide-binding</keyword>
<organism>
    <name type="scientific">Neisseria meningitidis serogroup C / serotype 2a (strain ATCC 700532 / DSM 15464 / FAM18)</name>
    <dbReference type="NCBI Taxonomy" id="272831"/>
    <lineage>
        <taxon>Bacteria</taxon>
        <taxon>Pseudomonadati</taxon>
        <taxon>Pseudomonadota</taxon>
        <taxon>Betaproteobacteria</taxon>
        <taxon>Neisseriales</taxon>
        <taxon>Neisseriaceae</taxon>
        <taxon>Neisseria</taxon>
    </lineage>
</organism>
<protein>
    <recommendedName>
        <fullName evidence="1">5'-nucleotidase SurE</fullName>
        <ecNumber evidence="1">3.1.3.5</ecNumber>
    </recommendedName>
    <alternativeName>
        <fullName evidence="1">Nucleoside 5'-monophosphate phosphohydrolase</fullName>
    </alternativeName>
</protein>